<organism>
    <name type="scientific">Eremothecium gossypii (strain ATCC 10895 / CBS 109.51 / FGSC 9923 / NRRL Y-1056)</name>
    <name type="common">Yeast</name>
    <name type="synonym">Ashbya gossypii</name>
    <dbReference type="NCBI Taxonomy" id="284811"/>
    <lineage>
        <taxon>Eukaryota</taxon>
        <taxon>Fungi</taxon>
        <taxon>Dikarya</taxon>
        <taxon>Ascomycota</taxon>
        <taxon>Saccharomycotina</taxon>
        <taxon>Saccharomycetes</taxon>
        <taxon>Saccharomycetales</taxon>
        <taxon>Saccharomycetaceae</taxon>
        <taxon>Eremothecium</taxon>
    </lineage>
</organism>
<evidence type="ECO:0000250" key="1"/>
<evidence type="ECO:0000255" key="2"/>
<evidence type="ECO:0000305" key="3"/>
<feature type="transit peptide" description="Mitochondrion" evidence="2">
    <location>
        <begin position="1"/>
        <end position="21"/>
    </location>
</feature>
<feature type="chain" id="PRO_0000292446" description="Putative redox protein FMP46, mitochondrial">
    <location>
        <begin position="22"/>
        <end position="133"/>
    </location>
</feature>
<feature type="active site" evidence="3">
    <location>
        <position position="93"/>
    </location>
</feature>
<dbReference type="EC" id="1.-.-.-"/>
<dbReference type="EMBL" id="AE016819">
    <property type="protein sequence ID" value="AAS53163.1"/>
    <property type="molecule type" value="Genomic_DNA"/>
</dbReference>
<dbReference type="RefSeq" id="NP_985339.1">
    <property type="nucleotide sequence ID" value="NM_210693.1"/>
</dbReference>
<dbReference type="SMR" id="Q755M5"/>
<dbReference type="FunCoup" id="Q755M5">
    <property type="interactions" value="65"/>
</dbReference>
<dbReference type="EnsemblFungi" id="AAS53163">
    <property type="protein sequence ID" value="AAS53163"/>
    <property type="gene ID" value="AGOS_AFL211W"/>
</dbReference>
<dbReference type="GeneID" id="4621563"/>
<dbReference type="KEGG" id="ago:AGOS_AFL211W"/>
<dbReference type="eggNOG" id="ENOG502S4SU">
    <property type="taxonomic scope" value="Eukaryota"/>
</dbReference>
<dbReference type="HOGENOM" id="CLU_1939538_0_0_1"/>
<dbReference type="InParanoid" id="Q755M5"/>
<dbReference type="OMA" id="LWVDWEK"/>
<dbReference type="OrthoDB" id="4044803at2759"/>
<dbReference type="Proteomes" id="UP000000591">
    <property type="component" value="Chromosome VI"/>
</dbReference>
<dbReference type="GO" id="GO:0005739">
    <property type="term" value="C:mitochondrion"/>
    <property type="evidence" value="ECO:0007669"/>
    <property type="project" value="UniProtKB-SubCell"/>
</dbReference>
<dbReference type="GO" id="GO:0016491">
    <property type="term" value="F:oxidoreductase activity"/>
    <property type="evidence" value="ECO:0007669"/>
    <property type="project" value="UniProtKB-KW"/>
</dbReference>
<dbReference type="Gene3D" id="3.40.30.10">
    <property type="entry name" value="Glutaredoxin"/>
    <property type="match status" value="1"/>
</dbReference>
<dbReference type="InterPro" id="IPR012882">
    <property type="entry name" value="Fmp46"/>
</dbReference>
<dbReference type="InterPro" id="IPR036249">
    <property type="entry name" value="Thioredoxin-like_sf"/>
</dbReference>
<dbReference type="PANTHER" id="PTHR28071">
    <property type="entry name" value="REDOX PROTEIN FMP46, MITOCHONDRIAL-RELATED"/>
    <property type="match status" value="1"/>
</dbReference>
<dbReference type="PANTHER" id="PTHR28071:SF1">
    <property type="entry name" value="REDOX PROTEIN FMP46, MITOCHONDRIAL-RELATED"/>
    <property type="match status" value="1"/>
</dbReference>
<dbReference type="Pfam" id="PF07955">
    <property type="entry name" value="DUF1687"/>
    <property type="match status" value="1"/>
</dbReference>
<dbReference type="SUPFAM" id="SSF52833">
    <property type="entry name" value="Thioredoxin-like"/>
    <property type="match status" value="1"/>
</dbReference>
<gene>
    <name type="primary">FMP46</name>
    <name type="ordered locus">AFL211W</name>
</gene>
<keyword id="KW-0496">Mitochondrion</keyword>
<keyword id="KW-0560">Oxidoreductase</keyword>
<keyword id="KW-1185">Reference proteome</keyword>
<keyword id="KW-0809">Transit peptide</keyword>
<comment type="function">
    <text evidence="1">Putative mitochondrial redox protein which could be involved in the reduction of small toxic molecules.</text>
</comment>
<comment type="subcellular location">
    <subcellularLocation>
        <location evidence="1">Mitochondrion</location>
    </subcellularLocation>
</comment>
<comment type="similarity">
    <text evidence="3">Belongs to the FMP46 family.</text>
</comment>
<proteinExistence type="inferred from homology"/>
<sequence>MSLLRTLQMQPRVITVFAEHANVGAASEILGALKTASGPKCKVQVSTMFPTLEQLIYMSEINRTAVAAQVPRLSELLQKPSFSEEFSSPLAQCTQDGVWRSQGGLWVDWEKRLLGADGQSVHELLGSSTMTID</sequence>
<accession>Q755M5</accession>
<protein>
    <recommendedName>
        <fullName>Putative redox protein FMP46, mitochondrial</fullName>
        <ecNumber>1.-.-.-</ecNumber>
    </recommendedName>
</protein>
<name>FMP46_EREGS</name>
<reference key="1">
    <citation type="journal article" date="2004" name="Science">
        <title>The Ashbya gossypii genome as a tool for mapping the ancient Saccharomyces cerevisiae genome.</title>
        <authorList>
            <person name="Dietrich F.S."/>
            <person name="Voegeli S."/>
            <person name="Brachat S."/>
            <person name="Lerch A."/>
            <person name="Gates K."/>
            <person name="Steiner S."/>
            <person name="Mohr C."/>
            <person name="Poehlmann R."/>
            <person name="Luedi P."/>
            <person name="Choi S."/>
            <person name="Wing R.A."/>
            <person name="Flavier A."/>
            <person name="Gaffney T.D."/>
            <person name="Philippsen P."/>
        </authorList>
    </citation>
    <scope>NUCLEOTIDE SEQUENCE [LARGE SCALE GENOMIC DNA]</scope>
    <source>
        <strain>ATCC 10895 / CBS 109.51 / FGSC 9923 / NRRL Y-1056</strain>
    </source>
</reference>
<reference key="2">
    <citation type="journal article" date="2013" name="G3 (Bethesda)">
        <title>Genomes of Ashbya fungi isolated from insects reveal four mating-type loci, numerous translocations, lack of transposons, and distinct gene duplications.</title>
        <authorList>
            <person name="Dietrich F.S."/>
            <person name="Voegeli S."/>
            <person name="Kuo S."/>
            <person name="Philippsen P."/>
        </authorList>
    </citation>
    <scope>GENOME REANNOTATION</scope>
    <source>
        <strain>ATCC 10895 / CBS 109.51 / FGSC 9923 / NRRL Y-1056</strain>
    </source>
</reference>